<keyword id="KW-0963">Cytoplasm</keyword>
<keyword id="KW-0648">Protein biosynthesis</keyword>
<comment type="function">
    <text evidence="1">Responsible for the release of ribosomes from messenger RNA at the termination of protein biosynthesis. May increase the efficiency of translation by recycling ribosomes from one round of translation to another.</text>
</comment>
<comment type="subcellular location">
    <subcellularLocation>
        <location evidence="1">Cytoplasm</location>
    </subcellularLocation>
</comment>
<comment type="similarity">
    <text evidence="1">Belongs to the RRF family.</text>
</comment>
<reference key="1">
    <citation type="submission" date="2008-05" db="EMBL/GenBank/DDBJ databases">
        <title>Genome sequence of Helicobacter pylori from the remote Amazon: traces of Asian ancestry of the first Americans.</title>
        <authorList>
            <person name="Kersulyte D."/>
            <person name="Kalia A."/>
            <person name="Gilman R.H."/>
            <person name="Berg D.E."/>
        </authorList>
    </citation>
    <scope>NUCLEOTIDE SEQUENCE [LARGE SCALE GENOMIC DNA]</scope>
    <source>
        <strain>Shi470</strain>
    </source>
</reference>
<proteinExistence type="inferred from homology"/>
<protein>
    <recommendedName>
        <fullName evidence="1">Ribosome-recycling factor</fullName>
        <shortName evidence="1">RRF</shortName>
    </recommendedName>
    <alternativeName>
        <fullName evidence="1">Ribosome-releasing factor</fullName>
    </alternativeName>
</protein>
<accession>B2UV20</accession>
<feature type="chain" id="PRO_1000090750" description="Ribosome-recycling factor">
    <location>
        <begin position="1"/>
        <end position="185"/>
    </location>
</feature>
<name>RRF_HELPS</name>
<dbReference type="EMBL" id="CP001072">
    <property type="protein sequence ID" value="ACD48702.1"/>
    <property type="molecule type" value="Genomic_DNA"/>
</dbReference>
<dbReference type="RefSeq" id="WP_000938357.1">
    <property type="nucleotide sequence ID" value="NC_010698.2"/>
</dbReference>
<dbReference type="SMR" id="B2UV20"/>
<dbReference type="KEGG" id="hps:HPSH_06510"/>
<dbReference type="HOGENOM" id="CLU_073981_2_0_7"/>
<dbReference type="GO" id="GO:0005829">
    <property type="term" value="C:cytosol"/>
    <property type="evidence" value="ECO:0007669"/>
    <property type="project" value="GOC"/>
</dbReference>
<dbReference type="GO" id="GO:0043023">
    <property type="term" value="F:ribosomal large subunit binding"/>
    <property type="evidence" value="ECO:0007669"/>
    <property type="project" value="TreeGrafter"/>
</dbReference>
<dbReference type="GO" id="GO:0002184">
    <property type="term" value="P:cytoplasmic translational termination"/>
    <property type="evidence" value="ECO:0007669"/>
    <property type="project" value="TreeGrafter"/>
</dbReference>
<dbReference type="CDD" id="cd00520">
    <property type="entry name" value="RRF"/>
    <property type="match status" value="1"/>
</dbReference>
<dbReference type="FunFam" id="1.10.132.20:FF:000001">
    <property type="entry name" value="Ribosome-recycling factor"/>
    <property type="match status" value="1"/>
</dbReference>
<dbReference type="FunFam" id="3.30.1360.40:FF:000001">
    <property type="entry name" value="Ribosome-recycling factor"/>
    <property type="match status" value="1"/>
</dbReference>
<dbReference type="Gene3D" id="3.30.1360.40">
    <property type="match status" value="1"/>
</dbReference>
<dbReference type="Gene3D" id="1.10.132.20">
    <property type="entry name" value="Ribosome-recycling factor"/>
    <property type="match status" value="1"/>
</dbReference>
<dbReference type="HAMAP" id="MF_00040">
    <property type="entry name" value="RRF"/>
    <property type="match status" value="1"/>
</dbReference>
<dbReference type="InterPro" id="IPR002661">
    <property type="entry name" value="Ribosome_recyc_fac"/>
</dbReference>
<dbReference type="InterPro" id="IPR023584">
    <property type="entry name" value="Ribosome_recyc_fac_dom"/>
</dbReference>
<dbReference type="InterPro" id="IPR036191">
    <property type="entry name" value="RRF_sf"/>
</dbReference>
<dbReference type="NCBIfam" id="TIGR00496">
    <property type="entry name" value="frr"/>
    <property type="match status" value="1"/>
</dbReference>
<dbReference type="PANTHER" id="PTHR20982:SF3">
    <property type="entry name" value="MITOCHONDRIAL RIBOSOME RECYCLING FACTOR PSEUDO 1"/>
    <property type="match status" value="1"/>
</dbReference>
<dbReference type="PANTHER" id="PTHR20982">
    <property type="entry name" value="RIBOSOME RECYCLING FACTOR"/>
    <property type="match status" value="1"/>
</dbReference>
<dbReference type="Pfam" id="PF01765">
    <property type="entry name" value="RRF"/>
    <property type="match status" value="1"/>
</dbReference>
<dbReference type="SUPFAM" id="SSF55194">
    <property type="entry name" value="Ribosome recycling factor, RRF"/>
    <property type="match status" value="1"/>
</dbReference>
<evidence type="ECO:0000255" key="1">
    <source>
        <dbReference type="HAMAP-Rule" id="MF_00040"/>
    </source>
</evidence>
<gene>
    <name evidence="1" type="primary">frr</name>
    <name type="ordered locus">HPSH_06510</name>
</gene>
<organism>
    <name type="scientific">Helicobacter pylori (strain Shi470)</name>
    <dbReference type="NCBI Taxonomy" id="512562"/>
    <lineage>
        <taxon>Bacteria</taxon>
        <taxon>Pseudomonadati</taxon>
        <taxon>Campylobacterota</taxon>
        <taxon>Epsilonproteobacteria</taxon>
        <taxon>Campylobacterales</taxon>
        <taxon>Helicobacteraceae</taxon>
        <taxon>Helicobacter</taxon>
    </lineage>
</organism>
<sequence length="185" mass="20946">MLQAIYNETKDLMQKSIQALNRDFSTLRSAKVSVNILDHIKVDYYGTPTTLNQVGSVMSLDATTLQISPWEKNLLKEIERSIQEANIGVNPNNDGETIKLFFPPMTTEQRKLIAKDAKAMGEKAKVAVRNIRQDANNKIKKLEKDKEISEDESKKAQEQIQKITDEAIKTIDESVKNKEDAILKV</sequence>